<name>PYRC_RALN1</name>
<feature type="chain" id="PRO_0000147215" description="Dihydroorotase">
    <location>
        <begin position="1"/>
        <end position="344"/>
    </location>
</feature>
<feature type="active site" evidence="1">
    <location>
        <position position="248"/>
    </location>
</feature>
<feature type="binding site" evidence="1">
    <location>
        <position position="14"/>
    </location>
    <ligand>
        <name>Zn(2+)</name>
        <dbReference type="ChEBI" id="CHEBI:29105"/>
        <label>1</label>
    </ligand>
</feature>
<feature type="binding site" evidence="1">
    <location>
        <begin position="16"/>
        <end position="18"/>
    </location>
    <ligand>
        <name>substrate</name>
    </ligand>
</feature>
<feature type="binding site" evidence="1">
    <location>
        <position position="16"/>
    </location>
    <ligand>
        <name>Zn(2+)</name>
        <dbReference type="ChEBI" id="CHEBI:29105"/>
        <label>1</label>
    </ligand>
</feature>
<feature type="binding site" evidence="1">
    <location>
        <position position="42"/>
    </location>
    <ligand>
        <name>substrate</name>
    </ligand>
</feature>
<feature type="binding site" description="via carbamate group" evidence="1">
    <location>
        <position position="100"/>
    </location>
    <ligand>
        <name>Zn(2+)</name>
        <dbReference type="ChEBI" id="CHEBI:29105"/>
        <label>1</label>
    </ligand>
</feature>
<feature type="binding site" description="via carbamate group" evidence="1">
    <location>
        <position position="100"/>
    </location>
    <ligand>
        <name>Zn(2+)</name>
        <dbReference type="ChEBI" id="CHEBI:29105"/>
        <label>2</label>
    </ligand>
</feature>
<feature type="binding site" evidence="1">
    <location>
        <position position="137"/>
    </location>
    <ligand>
        <name>substrate</name>
    </ligand>
</feature>
<feature type="binding site" evidence="1">
    <location>
        <position position="137"/>
    </location>
    <ligand>
        <name>Zn(2+)</name>
        <dbReference type="ChEBI" id="CHEBI:29105"/>
        <label>2</label>
    </ligand>
</feature>
<feature type="binding site" evidence="1">
    <location>
        <position position="175"/>
    </location>
    <ligand>
        <name>Zn(2+)</name>
        <dbReference type="ChEBI" id="CHEBI:29105"/>
        <label>2</label>
    </ligand>
</feature>
<feature type="binding site" evidence="1">
    <location>
        <position position="220"/>
    </location>
    <ligand>
        <name>substrate</name>
    </ligand>
</feature>
<feature type="binding site" evidence="1">
    <location>
        <position position="248"/>
    </location>
    <ligand>
        <name>Zn(2+)</name>
        <dbReference type="ChEBI" id="CHEBI:29105"/>
        <label>1</label>
    </ligand>
</feature>
<feature type="binding site" evidence="1">
    <location>
        <position position="252"/>
    </location>
    <ligand>
        <name>substrate</name>
    </ligand>
</feature>
<feature type="binding site" evidence="1">
    <location>
        <position position="264"/>
    </location>
    <ligand>
        <name>substrate</name>
    </ligand>
</feature>
<feature type="modified residue" description="N6-carboxylysine" evidence="1">
    <location>
        <position position="100"/>
    </location>
</feature>
<dbReference type="EC" id="3.5.2.3" evidence="1"/>
<dbReference type="EMBL" id="AL646052">
    <property type="protein sequence ID" value="CAD14015.1"/>
    <property type="molecule type" value="Genomic_DNA"/>
</dbReference>
<dbReference type="RefSeq" id="WP_011000448.1">
    <property type="nucleotide sequence ID" value="NC_003295.1"/>
</dbReference>
<dbReference type="SMR" id="Q8Y249"/>
<dbReference type="STRING" id="267608.RSc0487"/>
<dbReference type="MEROPS" id="M38.A02"/>
<dbReference type="EnsemblBacteria" id="CAD14015">
    <property type="protein sequence ID" value="CAD14015"/>
    <property type="gene ID" value="RSc0487"/>
</dbReference>
<dbReference type="KEGG" id="rso:RSc0487"/>
<dbReference type="eggNOG" id="COG0418">
    <property type="taxonomic scope" value="Bacteria"/>
</dbReference>
<dbReference type="HOGENOM" id="CLU_041558_1_0_4"/>
<dbReference type="UniPathway" id="UPA00070">
    <property type="reaction ID" value="UER00117"/>
</dbReference>
<dbReference type="Proteomes" id="UP000001436">
    <property type="component" value="Chromosome"/>
</dbReference>
<dbReference type="GO" id="GO:0005829">
    <property type="term" value="C:cytosol"/>
    <property type="evidence" value="ECO:0007669"/>
    <property type="project" value="TreeGrafter"/>
</dbReference>
<dbReference type="GO" id="GO:0004151">
    <property type="term" value="F:dihydroorotase activity"/>
    <property type="evidence" value="ECO:0007669"/>
    <property type="project" value="UniProtKB-UniRule"/>
</dbReference>
<dbReference type="GO" id="GO:0008270">
    <property type="term" value="F:zinc ion binding"/>
    <property type="evidence" value="ECO:0007669"/>
    <property type="project" value="UniProtKB-UniRule"/>
</dbReference>
<dbReference type="GO" id="GO:0006207">
    <property type="term" value="P:'de novo' pyrimidine nucleobase biosynthetic process"/>
    <property type="evidence" value="ECO:0007669"/>
    <property type="project" value="TreeGrafter"/>
</dbReference>
<dbReference type="GO" id="GO:0044205">
    <property type="term" value="P:'de novo' UMP biosynthetic process"/>
    <property type="evidence" value="ECO:0007669"/>
    <property type="project" value="UniProtKB-UniRule"/>
</dbReference>
<dbReference type="CDD" id="cd01294">
    <property type="entry name" value="DHOase"/>
    <property type="match status" value="1"/>
</dbReference>
<dbReference type="FunFam" id="3.20.20.140:FF:000006">
    <property type="entry name" value="Dihydroorotase"/>
    <property type="match status" value="1"/>
</dbReference>
<dbReference type="Gene3D" id="3.20.20.140">
    <property type="entry name" value="Metal-dependent hydrolases"/>
    <property type="match status" value="1"/>
</dbReference>
<dbReference type="HAMAP" id="MF_00219">
    <property type="entry name" value="PyrC_classII"/>
    <property type="match status" value="1"/>
</dbReference>
<dbReference type="InterPro" id="IPR006680">
    <property type="entry name" value="Amidohydro-rel"/>
</dbReference>
<dbReference type="InterPro" id="IPR004721">
    <property type="entry name" value="DHOdimr"/>
</dbReference>
<dbReference type="InterPro" id="IPR002195">
    <property type="entry name" value="Dihydroorotase_CS"/>
</dbReference>
<dbReference type="InterPro" id="IPR032466">
    <property type="entry name" value="Metal_Hydrolase"/>
</dbReference>
<dbReference type="NCBIfam" id="TIGR00856">
    <property type="entry name" value="pyrC_dimer"/>
    <property type="match status" value="1"/>
</dbReference>
<dbReference type="PANTHER" id="PTHR43137">
    <property type="entry name" value="DIHYDROOROTASE"/>
    <property type="match status" value="1"/>
</dbReference>
<dbReference type="PANTHER" id="PTHR43137:SF1">
    <property type="entry name" value="DIHYDROOROTASE"/>
    <property type="match status" value="1"/>
</dbReference>
<dbReference type="Pfam" id="PF01979">
    <property type="entry name" value="Amidohydro_1"/>
    <property type="match status" value="1"/>
</dbReference>
<dbReference type="PIRSF" id="PIRSF001237">
    <property type="entry name" value="DHOdimr"/>
    <property type="match status" value="1"/>
</dbReference>
<dbReference type="SUPFAM" id="SSF51556">
    <property type="entry name" value="Metallo-dependent hydrolases"/>
    <property type="match status" value="1"/>
</dbReference>
<dbReference type="PROSITE" id="PS00482">
    <property type="entry name" value="DIHYDROOROTASE_1"/>
    <property type="match status" value="1"/>
</dbReference>
<dbReference type="PROSITE" id="PS00483">
    <property type="entry name" value="DIHYDROOROTASE_2"/>
    <property type="match status" value="1"/>
</dbReference>
<gene>
    <name evidence="1" type="primary">pyrC</name>
    <name type="ordered locus">RSc0487</name>
    <name type="ORF">RS05822</name>
</gene>
<keyword id="KW-0378">Hydrolase</keyword>
<keyword id="KW-0479">Metal-binding</keyword>
<keyword id="KW-0665">Pyrimidine biosynthesis</keyword>
<keyword id="KW-1185">Reference proteome</keyword>
<keyword id="KW-0862">Zinc</keyword>
<evidence type="ECO:0000255" key="1">
    <source>
        <dbReference type="HAMAP-Rule" id="MF_00219"/>
    </source>
</evidence>
<sequence length="344" mass="37816">MIDTLTIVRPDDWHLHLRDGDALADVVGDTARQFGRAIIMPNLKPPVTTTAQARAYRERILAALPAGTRFEPLMTLYLTDNTTPEEVRAARASGFVHGVKLYPAGATTNSDAGVTDLRRCAKTLEAMQDVGMPLLVHGEVTDPTVDIFDREAVFIDTVMQPLRRDFPALKVVFEHITTKHAAEYVRDAQGPVGATITAHHLLYNRNALFVGGIRPHYYCLPVLKRETHRLALVAAATSGHPRFFLGTDSAPHAKGLKEHACGCAGCYTALHAMELYAEAFEDANALDKLEGFASLHGPDFYGLPRNAGTLTLTRSQWQLPAEVPFGEQMLVPLRGGEMLRWKTV</sequence>
<comment type="function">
    <text evidence="1">Catalyzes the reversible cyclization of carbamoyl aspartate to dihydroorotate.</text>
</comment>
<comment type="catalytic activity">
    <reaction evidence="1">
        <text>(S)-dihydroorotate + H2O = N-carbamoyl-L-aspartate + H(+)</text>
        <dbReference type="Rhea" id="RHEA:24296"/>
        <dbReference type="ChEBI" id="CHEBI:15377"/>
        <dbReference type="ChEBI" id="CHEBI:15378"/>
        <dbReference type="ChEBI" id="CHEBI:30864"/>
        <dbReference type="ChEBI" id="CHEBI:32814"/>
        <dbReference type="EC" id="3.5.2.3"/>
    </reaction>
</comment>
<comment type="cofactor">
    <cofactor evidence="1">
        <name>Zn(2+)</name>
        <dbReference type="ChEBI" id="CHEBI:29105"/>
    </cofactor>
    <text evidence="1">Binds 2 Zn(2+) ions per subunit.</text>
</comment>
<comment type="pathway">
    <text evidence="1">Pyrimidine metabolism; UMP biosynthesis via de novo pathway; (S)-dihydroorotate from bicarbonate: step 3/3.</text>
</comment>
<comment type="subunit">
    <text evidence="1">Homodimer.</text>
</comment>
<comment type="similarity">
    <text evidence="1">Belongs to the metallo-dependent hydrolases superfamily. DHOase family. Class II DHOase subfamily.</text>
</comment>
<organism>
    <name type="scientific">Ralstonia nicotianae (strain ATCC BAA-1114 / GMI1000)</name>
    <name type="common">Ralstonia solanacearum</name>
    <dbReference type="NCBI Taxonomy" id="267608"/>
    <lineage>
        <taxon>Bacteria</taxon>
        <taxon>Pseudomonadati</taxon>
        <taxon>Pseudomonadota</taxon>
        <taxon>Betaproteobacteria</taxon>
        <taxon>Burkholderiales</taxon>
        <taxon>Burkholderiaceae</taxon>
        <taxon>Ralstonia</taxon>
        <taxon>Ralstonia solanacearum species complex</taxon>
    </lineage>
</organism>
<protein>
    <recommendedName>
        <fullName evidence="1">Dihydroorotase</fullName>
        <shortName evidence="1">DHOase</shortName>
        <ecNumber evidence="1">3.5.2.3</ecNumber>
    </recommendedName>
</protein>
<accession>Q8Y249</accession>
<reference key="1">
    <citation type="journal article" date="2002" name="Nature">
        <title>Genome sequence of the plant pathogen Ralstonia solanacearum.</title>
        <authorList>
            <person name="Salanoubat M."/>
            <person name="Genin S."/>
            <person name="Artiguenave F."/>
            <person name="Gouzy J."/>
            <person name="Mangenot S."/>
            <person name="Arlat M."/>
            <person name="Billault A."/>
            <person name="Brottier P."/>
            <person name="Camus J.-C."/>
            <person name="Cattolico L."/>
            <person name="Chandler M."/>
            <person name="Choisne N."/>
            <person name="Claudel-Renard C."/>
            <person name="Cunnac S."/>
            <person name="Demange N."/>
            <person name="Gaspin C."/>
            <person name="Lavie M."/>
            <person name="Moisan A."/>
            <person name="Robert C."/>
            <person name="Saurin W."/>
            <person name="Schiex T."/>
            <person name="Siguier P."/>
            <person name="Thebault P."/>
            <person name="Whalen M."/>
            <person name="Wincker P."/>
            <person name="Levy M."/>
            <person name="Weissenbach J."/>
            <person name="Boucher C.A."/>
        </authorList>
    </citation>
    <scope>NUCLEOTIDE SEQUENCE [LARGE SCALE GENOMIC DNA]</scope>
    <source>
        <strain>ATCC BAA-1114 / GMI1000</strain>
    </source>
</reference>
<proteinExistence type="inferred from homology"/>